<accession>A7M908</accession>
<evidence type="ECO:0000255" key="1">
    <source>
        <dbReference type="HAMAP-Rule" id="MF_00437"/>
    </source>
</evidence>
<evidence type="ECO:0000305" key="2"/>
<dbReference type="EMBL" id="AM711639">
    <property type="protein sequence ID" value="CAM98336.1"/>
    <property type="molecule type" value="Genomic_DNA"/>
</dbReference>
<dbReference type="RefSeq" id="YP_001430050.1">
    <property type="nucleotide sequence ID" value="NC_009765.1"/>
</dbReference>
<dbReference type="GeneID" id="5536717"/>
<dbReference type="GO" id="GO:0009522">
    <property type="term" value="C:photosystem I"/>
    <property type="evidence" value="ECO:0007669"/>
    <property type="project" value="InterPro"/>
</dbReference>
<dbReference type="GO" id="GO:0055035">
    <property type="term" value="C:plastid thylakoid membrane"/>
    <property type="evidence" value="ECO:0007669"/>
    <property type="project" value="UniProtKB-SubCell"/>
</dbReference>
<dbReference type="GO" id="GO:0015979">
    <property type="term" value="P:photosynthesis"/>
    <property type="evidence" value="ECO:0007669"/>
    <property type="project" value="UniProtKB-UniRule"/>
</dbReference>
<dbReference type="HAMAP" id="MF_00437">
    <property type="entry name" value="Ycf4"/>
    <property type="match status" value="1"/>
</dbReference>
<dbReference type="InterPro" id="IPR003359">
    <property type="entry name" value="PSI_Ycf4_assembly"/>
</dbReference>
<dbReference type="PANTHER" id="PTHR33288">
    <property type="match status" value="1"/>
</dbReference>
<dbReference type="PANTHER" id="PTHR33288:SF4">
    <property type="entry name" value="PHOTOSYSTEM I ASSEMBLY PROTEIN YCF4"/>
    <property type="match status" value="1"/>
</dbReference>
<dbReference type="Pfam" id="PF02392">
    <property type="entry name" value="Ycf4"/>
    <property type="match status" value="1"/>
</dbReference>
<keyword id="KW-0472">Membrane</keyword>
<keyword id="KW-0602">Photosynthesis</keyword>
<keyword id="KW-0934">Plastid</keyword>
<keyword id="KW-0793">Thylakoid</keyword>
<keyword id="KW-0812">Transmembrane</keyword>
<keyword id="KW-1133">Transmembrane helix</keyword>
<protein>
    <recommendedName>
        <fullName evidence="1">Photosystem I assembly protein Ycf4</fullName>
    </recommendedName>
</protein>
<organism>
    <name type="scientific">Cuscuta gronovii</name>
    <name type="common">Common dodder</name>
    <name type="synonym">Epithymum gronovii</name>
    <dbReference type="NCBI Taxonomy" id="35886"/>
    <lineage>
        <taxon>Eukaryota</taxon>
        <taxon>Viridiplantae</taxon>
        <taxon>Streptophyta</taxon>
        <taxon>Embryophyta</taxon>
        <taxon>Tracheophyta</taxon>
        <taxon>Spermatophyta</taxon>
        <taxon>Magnoliopsida</taxon>
        <taxon>eudicotyledons</taxon>
        <taxon>Gunneridae</taxon>
        <taxon>Pentapetalae</taxon>
        <taxon>asterids</taxon>
        <taxon>lamiids</taxon>
        <taxon>Solanales</taxon>
        <taxon>Convolvulaceae</taxon>
        <taxon>Cuscuteae</taxon>
        <taxon>Cuscuta</taxon>
        <taxon>Cuscuta subgen. Grammica</taxon>
        <taxon>Cuscuta sect. Oxycarpae</taxon>
    </lineage>
</organism>
<reference key="1">
    <citation type="journal article" date="2007" name="BMC Plant Biol.">
        <title>Complete DNA sequences of the plastid genomes of two parasitic flowering plant species, Cuscuta reflexa and Cuscuta gronovii.</title>
        <authorList>
            <person name="Funk H.T."/>
            <person name="Berg S."/>
            <person name="Krupinska K."/>
            <person name="Maier U.-G."/>
            <person name="Krause K."/>
        </authorList>
    </citation>
    <scope>NUCLEOTIDE SEQUENCE [LARGE SCALE GENOMIC DNA]</scope>
</reference>
<sequence length="176" mass="20540">MSWRSEQIWIELIPGSRRGSNFVWAFILFFGSLEFILVGTASYFSQNLIAFFPQGMVMIFYGISGLFISLYLSSMLFWNVGGGYNQFDKTRGVICIFRWVFPGRNRRLLLRFFMKDIRSIRIEVKEGFYTRRLLYMDIRGQKAIPLTRTDEVLTPVEIEKKAAELASFLCVPIEVL</sequence>
<proteinExistence type="inferred from homology"/>
<comment type="function">
    <text evidence="1">Seems to be required for the assembly of the photosystem I complex.</text>
</comment>
<comment type="subcellular location">
    <subcellularLocation>
        <location evidence="2">Plastid thylakoid membrane</location>
        <topology evidence="1">Multi-pass membrane protein</topology>
    </subcellularLocation>
</comment>
<comment type="similarity">
    <text evidence="1">Belongs to the Ycf4 family.</text>
</comment>
<comment type="caution">
    <text evidence="2">Young tissue from this organism is photosynthetic and contains some thylakoids, although the photosynthetic activity does not exceed the light compensation point.</text>
</comment>
<name>YCF4_CUSGR</name>
<feature type="chain" id="PRO_0000326004" description="Photosystem I assembly protein Ycf4">
    <location>
        <begin position="1"/>
        <end position="176"/>
    </location>
</feature>
<feature type="transmembrane region" description="Helical" evidence="1">
    <location>
        <begin position="22"/>
        <end position="42"/>
    </location>
</feature>
<feature type="transmembrane region" description="Helical" evidence="1">
    <location>
        <begin position="48"/>
        <end position="68"/>
    </location>
</feature>
<geneLocation type="plastid"/>
<gene>
    <name evidence="1" type="primary">ycf4</name>
</gene>